<accession>B7G620</accession>
<dbReference type="EC" id="1.1.1.41" evidence="6"/>
<dbReference type="EMBL" id="CM000618">
    <property type="protein sequence ID" value="EEC45786.1"/>
    <property type="status" value="ALT_SEQ"/>
    <property type="molecule type" value="Genomic_DNA"/>
</dbReference>
<dbReference type="RefSeq" id="XP_002182499.1">
    <property type="nucleotide sequence ID" value="XM_002182463.1"/>
</dbReference>
<dbReference type="PDB" id="6LKZ">
    <property type="method" value="X-ray"/>
    <property type="resolution" value="2.80 A"/>
    <property type="chains" value="C/D=54-548"/>
</dbReference>
<dbReference type="PDBsum" id="6LKZ"/>
<dbReference type="SMR" id="B7G620"/>
<dbReference type="FunCoup" id="B7G620">
    <property type="interactions" value="272"/>
</dbReference>
<dbReference type="STRING" id="556484.B7G620"/>
<dbReference type="PaxDb" id="2850-Phatr14762"/>
<dbReference type="GeneID" id="7203279"/>
<dbReference type="KEGG" id="pti:PHATRDRAFT_14762"/>
<dbReference type="eggNOG" id="KOG1526">
    <property type="taxonomic scope" value="Eukaryota"/>
</dbReference>
<dbReference type="HOGENOM" id="CLU_487082_0_0_1"/>
<dbReference type="InParanoid" id="B7G620"/>
<dbReference type="OMA" id="HNTFRYG"/>
<dbReference type="OrthoDB" id="248923at2759"/>
<dbReference type="Proteomes" id="UP000000759">
    <property type="component" value="Chromosome 16"/>
</dbReference>
<dbReference type="GO" id="GO:0005739">
    <property type="term" value="C:mitochondrion"/>
    <property type="evidence" value="ECO:0000305"/>
    <property type="project" value="UniProtKB"/>
</dbReference>
<dbReference type="GO" id="GO:0005509">
    <property type="term" value="F:calcium ion binding"/>
    <property type="evidence" value="ECO:0007669"/>
    <property type="project" value="InterPro"/>
</dbReference>
<dbReference type="GO" id="GO:0042802">
    <property type="term" value="F:identical protein binding"/>
    <property type="evidence" value="ECO:0000314"/>
    <property type="project" value="UniProtKB"/>
</dbReference>
<dbReference type="GO" id="GO:0004449">
    <property type="term" value="F:isocitrate dehydrogenase (NAD+) activity"/>
    <property type="evidence" value="ECO:0000314"/>
    <property type="project" value="UniProtKB"/>
</dbReference>
<dbReference type="GO" id="GO:0004450">
    <property type="term" value="F:isocitrate dehydrogenase (NADP+) activity"/>
    <property type="evidence" value="ECO:0007669"/>
    <property type="project" value="InterPro"/>
</dbReference>
<dbReference type="GO" id="GO:0000287">
    <property type="term" value="F:magnesium ion binding"/>
    <property type="evidence" value="ECO:0000250"/>
    <property type="project" value="UniProtKB"/>
</dbReference>
<dbReference type="GO" id="GO:0042803">
    <property type="term" value="F:protein homodimerization activity"/>
    <property type="evidence" value="ECO:0000314"/>
    <property type="project" value="UniProtKB"/>
</dbReference>
<dbReference type="GO" id="GO:0006102">
    <property type="term" value="P:isocitrate metabolic process"/>
    <property type="evidence" value="ECO:0000314"/>
    <property type="project" value="UniProtKB"/>
</dbReference>
<dbReference type="GO" id="GO:0019674">
    <property type="term" value="P:NAD metabolic process"/>
    <property type="evidence" value="ECO:0000314"/>
    <property type="project" value="UniProtKB"/>
</dbReference>
<dbReference type="GO" id="GO:0006739">
    <property type="term" value="P:NADP metabolic process"/>
    <property type="evidence" value="ECO:0007669"/>
    <property type="project" value="TreeGrafter"/>
</dbReference>
<dbReference type="GO" id="GO:0006099">
    <property type="term" value="P:tricarboxylic acid cycle"/>
    <property type="evidence" value="ECO:0000314"/>
    <property type="project" value="UniProtKB"/>
</dbReference>
<dbReference type="CDD" id="cd00051">
    <property type="entry name" value="EFh"/>
    <property type="match status" value="1"/>
</dbReference>
<dbReference type="Gene3D" id="1.10.238.10">
    <property type="entry name" value="EF-hand"/>
    <property type="match status" value="1"/>
</dbReference>
<dbReference type="Gene3D" id="3.40.718.10">
    <property type="entry name" value="Isopropylmalate Dehydrogenase"/>
    <property type="match status" value="1"/>
</dbReference>
<dbReference type="InterPro" id="IPR011992">
    <property type="entry name" value="EF-hand-dom_pair"/>
</dbReference>
<dbReference type="InterPro" id="IPR018247">
    <property type="entry name" value="EF_Hand_1_Ca_BS"/>
</dbReference>
<dbReference type="InterPro" id="IPR002048">
    <property type="entry name" value="EF_hand_dom"/>
</dbReference>
<dbReference type="InterPro" id="IPR004790">
    <property type="entry name" value="Isocitrate_DH_NADP"/>
</dbReference>
<dbReference type="InterPro" id="IPR024084">
    <property type="entry name" value="IsoPropMal-DH-like_dom"/>
</dbReference>
<dbReference type="PANTHER" id="PTHR11822:SF21">
    <property type="entry name" value="ISOCITRATE DEHYDROGENASE [NADP], MITOCHONDRIAL"/>
    <property type="match status" value="1"/>
</dbReference>
<dbReference type="PANTHER" id="PTHR11822">
    <property type="entry name" value="NADP-SPECIFIC ISOCITRATE DEHYDROGENASE"/>
    <property type="match status" value="1"/>
</dbReference>
<dbReference type="Pfam" id="PF00036">
    <property type="entry name" value="EF-hand_1"/>
    <property type="match status" value="1"/>
</dbReference>
<dbReference type="Pfam" id="PF00180">
    <property type="entry name" value="Iso_dh"/>
    <property type="match status" value="1"/>
</dbReference>
<dbReference type="SMART" id="SM00054">
    <property type="entry name" value="EFh"/>
    <property type="match status" value="1"/>
</dbReference>
<dbReference type="SMART" id="SM01329">
    <property type="entry name" value="Iso_dh"/>
    <property type="match status" value="1"/>
</dbReference>
<dbReference type="SUPFAM" id="SSF47473">
    <property type="entry name" value="EF-hand"/>
    <property type="match status" value="1"/>
</dbReference>
<dbReference type="SUPFAM" id="SSF53659">
    <property type="entry name" value="Isocitrate/Isopropylmalate dehydrogenase-like"/>
    <property type="match status" value="1"/>
</dbReference>
<dbReference type="PROSITE" id="PS00018">
    <property type="entry name" value="EF_HAND_1"/>
    <property type="match status" value="1"/>
</dbReference>
<dbReference type="PROSITE" id="PS50222">
    <property type="entry name" value="EF_HAND_2"/>
    <property type="match status" value="1"/>
</dbReference>
<sequence>MSSLSTLRILHSTAGRRWASYYGIYPKSAACSSSSVAIARFFSTAADRPPKHAMLSVENKVVAPPMVYIAGEEMTRYACDLVVKSWLEPYFDLSQWEYFDLSCVNRDNTNDQVLRDAVTAGQRIGAIFKEPTITPSAIQKKAFGLKNSLGSPNGAMRAGWNGITISRDTIHIDGIELGYKRPVFFERHAVGGEYGAGWSKVGRGTLLTTYLPSDGRDPFVVDKRDLTDQHNVVVTYHNPYDNVEPLAHLFFQRCLDANITPYVVTKKTVFKWQEGFWAVMKDVFDEHYKSRFEEKGLLQACGGDLQHLISDAATMQLIRWTDGGFGMAAHNYDGDMLTDQIAQVHRSPGFITSNLVGKAPDGSLIKEFEASHGTVSDLWNDHLAGKETSLNPLGLVEAIVGALQHAAVLDAEKNPDDEHKVKARDQIFNFTTTLRTAMHNTFRYGQGTRDMSGPSGYTTEDFVRKVAWRLQRYLDAQYDEAPPPQLGEPSRKLRRNYDIDEEAINGLFQKYDKNGDGFIDFEEFTRMLVKMNLAPLLTKKEKEKKPDV</sequence>
<evidence type="ECO:0000250" key="1">
    <source>
        <dbReference type="UniProtKB" id="A0A096P8D3"/>
    </source>
</evidence>
<evidence type="ECO:0000255" key="2"/>
<evidence type="ECO:0000255" key="3">
    <source>
        <dbReference type="PROSITE-ProRule" id="PRU00448"/>
    </source>
</evidence>
<evidence type="ECO:0000255" key="4">
    <source>
        <dbReference type="PROSITE-ProRule" id="PRU10142"/>
    </source>
</evidence>
<evidence type="ECO:0000269" key="5">
    <source>
    </source>
</evidence>
<evidence type="ECO:0000303" key="6">
    <source>
    </source>
</evidence>
<evidence type="ECO:0000305" key="7"/>
<evidence type="ECO:0000305" key="8">
    <source>
    </source>
</evidence>
<evidence type="ECO:0000312" key="9">
    <source>
        <dbReference type="EMBL" id="EEC45786.1"/>
    </source>
</evidence>
<evidence type="ECO:0000312" key="10">
    <source>
        <dbReference type="Proteomes" id="UP000000759"/>
    </source>
</evidence>
<evidence type="ECO:0007744" key="11">
    <source>
        <dbReference type="PDB" id="6LKZ"/>
    </source>
</evidence>
<evidence type="ECO:0007829" key="12">
    <source>
        <dbReference type="PDB" id="6LKZ"/>
    </source>
</evidence>
<protein>
    <recommendedName>
        <fullName evidence="6">Isocitrate dehydrogenase [NAD(+)] 1, mitochondrial</fullName>
        <shortName evidence="6">PtIDH1</shortName>
        <ecNumber evidence="6">1.1.1.41</ecNumber>
    </recommendedName>
</protein>
<feature type="transit peptide" description="Mitochondrion" evidence="8">
    <location>
        <begin position="1"/>
        <end position="53"/>
    </location>
</feature>
<feature type="chain" id="PRO_0000456850" description="Isocitrate dehydrogenase [NAD(+)] 1, mitochondrial" evidence="8">
    <location>
        <begin position="54"/>
        <end position="548"/>
    </location>
</feature>
<feature type="domain" description="EF-hand" evidence="3">
    <location>
        <begin position="499"/>
        <end position="534"/>
    </location>
</feature>
<feature type="binding site" evidence="1">
    <location>
        <begin position="132"/>
        <end position="134"/>
    </location>
    <ligand>
        <name>NAD(+)</name>
        <dbReference type="ChEBI" id="CHEBI:57540"/>
    </ligand>
</feature>
<feature type="binding site" evidence="1">
    <location>
        <begin position="151"/>
        <end position="157"/>
    </location>
    <ligand>
        <name>D-threo-isocitrate</name>
        <dbReference type="ChEBI" id="CHEBI:15562"/>
    </ligand>
</feature>
<feature type="binding site" evidence="1">
    <location>
        <position position="153"/>
    </location>
    <ligand>
        <name>NAD(+)</name>
        <dbReference type="ChEBI" id="CHEBI:57540"/>
    </ligand>
</feature>
<feature type="binding site" evidence="1">
    <location>
        <position position="187"/>
    </location>
    <ligand>
        <name>D-threo-isocitrate</name>
        <dbReference type="ChEBI" id="CHEBI:15562"/>
    </ligand>
</feature>
<feature type="binding site" evidence="1">
    <location>
        <position position="194"/>
    </location>
    <ligand>
        <name>D-threo-isocitrate</name>
        <dbReference type="ChEBI" id="CHEBI:15562"/>
    </ligand>
</feature>
<feature type="binding site" evidence="1">
    <location>
        <position position="266"/>
    </location>
    <ligand>
        <name>D-threo-isocitrate</name>
        <dbReference type="ChEBI" id="CHEBI:15562"/>
    </ligand>
</feature>
<feature type="binding site" evidence="1">
    <location>
        <position position="311"/>
    </location>
    <ligand>
        <name>D-threo-isocitrate</name>
        <dbReference type="ChEBI" id="CHEBI:15562"/>
    </ligand>
</feature>
<feature type="binding site" evidence="1">
    <location>
        <position position="311"/>
    </location>
    <ligand>
        <name>Mg(2+)</name>
        <dbReference type="ChEBI" id="CHEBI:18420"/>
    </ligand>
</feature>
<feature type="binding site" evidence="1">
    <location>
        <position position="335"/>
    </location>
    <ligand>
        <name>D-threo-isocitrate</name>
        <dbReference type="ChEBI" id="CHEBI:15562"/>
    </ligand>
</feature>
<feature type="binding site" evidence="1">
    <location>
        <position position="335"/>
    </location>
    <ligand>
        <name>Mg(2+)</name>
        <dbReference type="ChEBI" id="CHEBI:18420"/>
    </ligand>
</feature>
<feature type="binding site" evidence="1">
    <location>
        <position position="339"/>
    </location>
    <ligand>
        <name>Mg(2+)</name>
        <dbReference type="ChEBI" id="CHEBI:18420"/>
    </ligand>
</feature>
<feature type="binding site" evidence="1">
    <location>
        <begin position="372"/>
        <end position="377"/>
    </location>
    <ligand>
        <name>NAD(+)</name>
        <dbReference type="ChEBI" id="CHEBI:57540"/>
    </ligand>
</feature>
<feature type="binding site" evidence="1">
    <location>
        <position position="391"/>
    </location>
    <ligand>
        <name>NAD(+)</name>
        <dbReference type="ChEBI" id="CHEBI:57540"/>
    </ligand>
</feature>
<feature type="binding site" evidence="3">
    <location>
        <position position="512"/>
    </location>
    <ligand>
        <name>Ca(2+)</name>
        <dbReference type="ChEBI" id="CHEBI:29108"/>
    </ligand>
</feature>
<feature type="binding site" evidence="3">
    <location>
        <position position="514"/>
    </location>
    <ligand>
        <name>Ca(2+)</name>
        <dbReference type="ChEBI" id="CHEBI:29108"/>
    </ligand>
</feature>
<feature type="binding site" evidence="3">
    <location>
        <position position="516"/>
    </location>
    <ligand>
        <name>Ca(2+)</name>
        <dbReference type="ChEBI" id="CHEBI:29108"/>
    </ligand>
</feature>
<feature type="binding site" evidence="4">
    <location>
        <position position="518"/>
    </location>
    <ligand>
        <name>Ca(2+)</name>
        <dbReference type="ChEBI" id="CHEBI:29108"/>
    </ligand>
</feature>
<feature type="binding site" evidence="3">
    <location>
        <position position="523"/>
    </location>
    <ligand>
        <name>Ca(2+)</name>
        <dbReference type="ChEBI" id="CHEBI:29108"/>
    </ligand>
</feature>
<feature type="mutagenesis site" description="Loss of catalytic activity. Loss of homodimerization." evidence="5">
    <location>
        <begin position="477"/>
        <end position="548"/>
    </location>
</feature>
<feature type="mutagenesis site" description="No effect on secondary structure conformation or specific activity, but rapidly decreased activity with increasing Ca(2+) concentrations in the presence of Mn(2+); when associated with A-514; A-516 and A-518." evidence="5">
    <original>D</original>
    <variation>A</variation>
    <location>
        <position position="512"/>
    </location>
</feature>
<feature type="mutagenesis site" description="No effect on secondary structure conformation or specific activity, but rapidly decreased activity with increasing Ca(2+) concentrations in the presence of Mn(2+); when associated with A-512; A-516 and A-518.">
    <original>N</original>
    <variation>A</variation>
    <location>
        <position position="514"/>
    </location>
</feature>
<feature type="mutagenesis site" description="No effect on secondary structure conformation or specific activity, but rapidly decreased activity with increasing Ca(2+) concentrations in the presence of Mn(2+); when associated with A-512; A-514 and A-518." evidence="5">
    <original>D</original>
    <variation>A</variation>
    <location>
        <position position="516"/>
    </location>
</feature>
<feature type="mutagenesis site" description="No effect on secondary structure conformation or specific activity, but rapidly decreased activity with increasing Ca(2+) concentrations in the presence of Mn(2+); when associated with A-512; A-514 and A-516." evidence="5">
    <original>F</original>
    <variation>A</variation>
    <location>
        <position position="518"/>
    </location>
</feature>
<feature type="strand" evidence="12">
    <location>
        <begin position="66"/>
        <end position="70"/>
    </location>
</feature>
<feature type="helix" evidence="12">
    <location>
        <begin position="73"/>
        <end position="86"/>
    </location>
</feature>
<feature type="turn" evidence="12">
    <location>
        <begin position="87"/>
        <end position="90"/>
    </location>
</feature>
<feature type="strand" evidence="12">
    <location>
        <begin position="94"/>
        <end position="100"/>
    </location>
</feature>
<feature type="helix" evidence="12">
    <location>
        <begin position="103"/>
        <end position="108"/>
    </location>
</feature>
<feature type="turn" evidence="12">
    <location>
        <begin position="109"/>
        <end position="111"/>
    </location>
</feature>
<feature type="helix" evidence="12">
    <location>
        <begin position="112"/>
        <end position="124"/>
    </location>
</feature>
<feature type="strand" evidence="12">
    <location>
        <begin position="126"/>
        <end position="129"/>
    </location>
</feature>
<feature type="helix" evidence="12">
    <location>
        <begin position="137"/>
        <end position="143"/>
    </location>
</feature>
<feature type="helix" evidence="12">
    <location>
        <begin position="153"/>
        <end position="160"/>
    </location>
</feature>
<feature type="turn" evidence="12">
    <location>
        <begin position="172"/>
        <end position="174"/>
    </location>
</feature>
<feature type="strand" evidence="12">
    <location>
        <begin position="178"/>
        <end position="181"/>
    </location>
</feature>
<feature type="strand" evidence="12">
    <location>
        <begin position="184"/>
        <end position="187"/>
    </location>
</feature>
<feature type="helix" evidence="12">
    <location>
        <begin position="193"/>
        <end position="195"/>
    </location>
</feature>
<feature type="strand" evidence="12">
    <location>
        <begin position="197"/>
        <end position="201"/>
    </location>
</feature>
<feature type="strand" evidence="12">
    <location>
        <begin position="203"/>
        <end position="216"/>
    </location>
</feature>
<feature type="strand" evidence="12">
    <location>
        <begin position="219"/>
        <end position="226"/>
    </location>
</feature>
<feature type="strand" evidence="12">
    <location>
        <begin position="228"/>
        <end position="239"/>
    </location>
</feature>
<feature type="helix" evidence="12">
    <location>
        <begin position="243"/>
        <end position="257"/>
    </location>
</feature>
<feature type="strand" evidence="12">
    <location>
        <begin position="260"/>
        <end position="265"/>
    </location>
</feature>
<feature type="turn" evidence="12">
    <location>
        <begin position="267"/>
        <end position="269"/>
    </location>
</feature>
<feature type="helix" evidence="12">
    <location>
        <begin position="271"/>
        <end position="273"/>
    </location>
</feature>
<feature type="helix" evidence="12">
    <location>
        <begin position="274"/>
        <end position="287"/>
    </location>
</feature>
<feature type="helix" evidence="12">
    <location>
        <begin position="289"/>
        <end position="294"/>
    </location>
</feature>
<feature type="turn" evidence="12">
    <location>
        <begin position="299"/>
        <end position="303"/>
    </location>
</feature>
<feature type="strand" evidence="12">
    <location>
        <begin position="307"/>
        <end position="309"/>
    </location>
</feature>
<feature type="helix" evidence="12">
    <location>
        <begin position="310"/>
        <end position="319"/>
    </location>
</feature>
<feature type="strand" evidence="12">
    <location>
        <begin position="325"/>
        <end position="329"/>
    </location>
</feature>
<feature type="helix" evidence="12">
    <location>
        <begin position="331"/>
        <end position="344"/>
    </location>
</feature>
<feature type="helix" evidence="12">
    <location>
        <begin position="348"/>
        <end position="350"/>
    </location>
</feature>
<feature type="strand" evidence="12">
    <location>
        <begin position="353"/>
        <end position="358"/>
    </location>
</feature>
<feature type="strand" evidence="12">
    <location>
        <begin position="364"/>
        <end position="369"/>
    </location>
</feature>
<feature type="helix" evidence="12">
    <location>
        <begin position="376"/>
        <end position="383"/>
    </location>
</feature>
<feature type="helix" evidence="12">
    <location>
        <begin position="393"/>
        <end position="413"/>
    </location>
</feature>
<feature type="helix" evidence="12">
    <location>
        <begin position="418"/>
        <end position="420"/>
    </location>
</feature>
<feature type="helix" evidence="12">
    <location>
        <begin position="421"/>
        <end position="443"/>
    </location>
</feature>
<feature type="turn" evidence="12">
    <location>
        <begin position="444"/>
        <end position="446"/>
    </location>
</feature>
<feature type="helix" evidence="12">
    <location>
        <begin position="449"/>
        <end position="452"/>
    </location>
</feature>
<feature type="helix" evidence="12">
    <location>
        <begin position="453"/>
        <end position="455"/>
    </location>
</feature>
<feature type="helix" evidence="12">
    <location>
        <begin position="459"/>
        <end position="473"/>
    </location>
</feature>
<feature type="turn" evidence="12">
    <location>
        <begin position="474"/>
        <end position="476"/>
    </location>
</feature>
<feature type="helix" evidence="12">
    <location>
        <begin position="491"/>
        <end position="493"/>
    </location>
</feature>
<feature type="helix" evidence="12">
    <location>
        <begin position="501"/>
        <end position="509"/>
    </location>
</feature>
<feature type="strand" evidence="12">
    <location>
        <begin position="514"/>
        <end position="517"/>
    </location>
</feature>
<feature type="helix" evidence="12">
    <location>
        <begin position="523"/>
        <end position="530"/>
    </location>
</feature>
<gene>
    <name evidence="6" type="primary">IDH1</name>
    <name evidence="9" type="ORF">PHATRDRAFT_14762</name>
</gene>
<keyword id="KW-0002">3D-structure</keyword>
<keyword id="KW-0106">Calcium</keyword>
<keyword id="KW-0460">Magnesium</keyword>
<keyword id="KW-0464">Manganese</keyword>
<keyword id="KW-0479">Metal-binding</keyword>
<keyword id="KW-0496">Mitochondrion</keyword>
<keyword id="KW-0520">NAD</keyword>
<keyword id="KW-0560">Oxidoreductase</keyword>
<keyword id="KW-1185">Reference proteome</keyword>
<keyword id="KW-0809">Transit peptide</keyword>
<keyword id="KW-0816">Tricarboxylic acid cycle</keyword>
<comment type="function">
    <text evidence="1 5">Performs an essential role in the oxidative function of the tricarboxylic acid cycle and respiration (By similarity). Catalyzes the decarboxylation of isocitrate to produce 2-oxoglutarate and generate NADH to provide electrons for energy production. No activity with NADP(+) (PubMed:32824636).</text>
</comment>
<comment type="catalytic activity">
    <reaction evidence="5">
        <text>D-threo-isocitrate + NAD(+) = 2-oxoglutarate + CO2 + NADH</text>
        <dbReference type="Rhea" id="RHEA:23632"/>
        <dbReference type="ChEBI" id="CHEBI:15562"/>
        <dbReference type="ChEBI" id="CHEBI:16526"/>
        <dbReference type="ChEBI" id="CHEBI:16810"/>
        <dbReference type="ChEBI" id="CHEBI:57540"/>
        <dbReference type="ChEBI" id="CHEBI:57945"/>
        <dbReference type="EC" id="1.1.1.41"/>
    </reaction>
    <physiologicalReaction direction="left-to-right" evidence="5">
        <dbReference type="Rhea" id="RHEA:23633"/>
    </physiologicalReaction>
</comment>
<comment type="cofactor">
    <cofactor evidence="5">
        <name>Mg(2+)</name>
        <dbReference type="ChEBI" id="CHEBI:18420"/>
    </cofactor>
    <cofactor evidence="5">
        <name>Mn(2+)</name>
        <dbReference type="ChEBI" id="CHEBI:29035"/>
    </cofactor>
    <text evidence="1">Binds 1 Mg(2+) or Mn(2+) ion per subunit.</text>
</comment>
<comment type="activity regulation">
    <text evidence="5">The homodimer exhibits allosteric regulation by isocitrate. Activated by Mn(2+) and Mg(2+). No activation by Na(+), K(+) or Li(+). Inhibited by Co(2+), Cu(2+) and Ni(2+), but not with Ca(2+) in the presence of Mn(2+) or Mg(2+). Competitively inhibited by NADH, but no effect on activity by 1.0 mM citrate. Strongly inhibited by excess ATP, ADP, AMP and alpha-ketoglutarate.</text>
</comment>
<comment type="biophysicochemical properties">
    <kinetics>
        <KM evidence="5">903 uM for NAD(+) with Mg(2+) as cofactor (at pH 8.0 and 25 degrees Celsius)</KM>
        <KM evidence="5">1132.5 uM for NAD(+) with Mn(2+) as cofactor (at pH 8.0 and 25 degrees Celsius)</KM>
        <Vmax evidence="5">87.13 umol/min/mg enzyme with Mn(2+) as cofactor (at pH 8.0 and 25 degrees Celsius)</Vmax>
        <Vmax evidence="5">48.34 umol/min/mg enzyme with Mg(2+) as cofactor (at pH 8.0 and 25 degrees Celsius)</Vmax>
        <text evidence="5">kcat is 180.5 sec(-1) for NAD(+) with Mn(2+) as cofactor. kcat is 79.0 sec(-1) for NAD(+) with Mg(2+) as cofactor.</text>
    </kinetics>
    <phDependence>
        <text evidence="5">Optimum pH is 8.0 with Mn(2+) as cofactor and 8.8 with Mg(2+) as cofactor.</text>
    </phDependence>
    <temperatureDependence>
        <text evidence="5">Optimum temperature is around 30 degrees Celsius with Mn(2+) as cofactor and 35 degrees Celsius with Mg(2+) as cofactor. Stable below 28 degrees Celsius, but rapidly loses activity above 30 degrees Celsius. Has 60% of maximal activity after 20-minute incubation at 35 degrees Celsius.</text>
    </temperatureDependence>
</comment>
<comment type="subunit">
    <text evidence="5">Homodimer.</text>
</comment>
<comment type="subcellular location">
    <subcellularLocation>
        <location evidence="2 8">Mitochondrion</location>
    </subcellularLocation>
</comment>
<comment type="domain">
    <text evidence="5">The C-terminal EF-hand domain is required for homodimerization.</text>
</comment>
<comment type="similarity">
    <text evidence="7">Belongs to the isocitrate and isopropylmalate dehydrogenases family.</text>
</comment>
<comment type="sequence caution" evidence="7">
    <conflict type="erroneous initiation">
        <sequence resource="EMBL-CDS" id="EEC45786"/>
    </conflict>
    <text>Truncated N-terminus.</text>
</comment>
<comment type="sequence caution" evidence="7">
    <conflict type="erroneous termination">
        <sequence resource="EMBL-CDS" id="EEC45786"/>
    </conflict>
    <text>Truncated C-terminus.</text>
</comment>
<proteinExistence type="evidence at protein level"/>
<name>IDH1_PHATC</name>
<reference evidence="11" key="1">
    <citation type="journal article" date="2020" name="Int. J. Mol. Sci.">
        <title>Biochemical Characterization and Crystal Structure of a Novel NAD+-Dependent Isocitrate Dehydrogenase from Phaeodactylum tricornutum.</title>
        <authorList>
            <person name="Huang S.P."/>
            <person name="Zhou L.C."/>
            <person name="Wen B."/>
            <person name="Wang P."/>
            <person name="Zhu G.P."/>
        </authorList>
    </citation>
    <scope>NUCLEOTIDE SEQUENCE [GENOMIC DNA]</scope>
    <scope>X-RAY CRYSTALLOGRAPHY (2.80 ANGSTROMS) OF 54-548 OF THE APOENZYME</scope>
    <scope>FUNCTION</scope>
    <scope>CATALYTIC ACTIVITY</scope>
    <scope>COFACTOR</scope>
    <scope>ACTIVITY REGULATION</scope>
    <scope>BIOPHYSICOCHEMICAL PROPERTIES</scope>
    <scope>SUBUNIT</scope>
    <scope>SUBCELLULAR LOCATION</scope>
    <scope>DOMAIN</scope>
    <scope>MUTAGENESIS OF 477-GLN--VAL-548; ASP-512; ASN-514; ASP-516 AND PHE-518</scope>
    <scope>CIRCULAR DICHROISM ANALYSIS</scope>
    <scope>PHYLOGENETIC ANALYSIS</scope>
    <source>
        <strain evidence="6">FACHB-2174</strain>
    </source>
</reference>
<reference evidence="9 10" key="2">
    <citation type="journal article" date="2008" name="Nature">
        <title>The Phaeodactylum genome reveals the evolutionary history of diatom genomes.</title>
        <authorList>
            <person name="Bowler C."/>
            <person name="Allen A.E."/>
            <person name="Badger J.H."/>
            <person name="Grimwood J."/>
            <person name="Jabbari K."/>
            <person name="Kuo A."/>
            <person name="Maheswari U."/>
            <person name="Martens C."/>
            <person name="Maumus F."/>
            <person name="Otillar R.P."/>
            <person name="Rayko E."/>
            <person name="Salamov A."/>
            <person name="Vandepoele K."/>
            <person name="Beszteri B."/>
            <person name="Gruber A."/>
            <person name="Heijde M."/>
            <person name="Katinka M."/>
            <person name="Mock T."/>
            <person name="Valentin K."/>
            <person name="Verret F."/>
            <person name="Berges J.A."/>
            <person name="Brownlee C."/>
            <person name="Cadoret J.P."/>
            <person name="Chiovitti A."/>
            <person name="Choi C.J."/>
            <person name="Coesel S."/>
            <person name="De Martino A."/>
            <person name="Detter J.C."/>
            <person name="Durkin C."/>
            <person name="Falciatore A."/>
            <person name="Fournet J."/>
            <person name="Haruta M."/>
            <person name="Huysman M.J."/>
            <person name="Jenkins B.D."/>
            <person name="Jiroutova K."/>
            <person name="Jorgensen R.E."/>
            <person name="Joubert Y."/>
            <person name="Kaplan A."/>
            <person name="Kroger N."/>
            <person name="Kroth P.G."/>
            <person name="La Roche J."/>
            <person name="Lindquist E."/>
            <person name="Lommer M."/>
            <person name="Martin-Jezequel V."/>
            <person name="Lopez P.J."/>
            <person name="Lucas S."/>
            <person name="Mangogna M."/>
            <person name="McGinnis K."/>
            <person name="Medlin L.K."/>
            <person name="Montsant A."/>
            <person name="Oudot-Le Secq M.P."/>
            <person name="Napoli C."/>
            <person name="Obornik M."/>
            <person name="Parker M.S."/>
            <person name="Petit J.L."/>
            <person name="Porcel B.M."/>
            <person name="Poulsen N."/>
            <person name="Robison M."/>
            <person name="Rychlewski L."/>
            <person name="Rynearson T.A."/>
            <person name="Schmutz J."/>
            <person name="Shapiro H."/>
            <person name="Siaut M."/>
            <person name="Stanley M."/>
            <person name="Sussman M.R."/>
            <person name="Taylor A.R."/>
            <person name="Vardi A."/>
            <person name="von Dassow P."/>
            <person name="Vyverman W."/>
            <person name="Willis A."/>
            <person name="Wyrwicz L.S."/>
            <person name="Rokhsar D.S."/>
            <person name="Weissenbach J."/>
            <person name="Armbrust E.V."/>
            <person name="Green B.R."/>
            <person name="Van de Peer Y."/>
            <person name="Grigoriev I.V."/>
        </authorList>
    </citation>
    <scope>NUCLEOTIDE SEQUENCE [LARGE SCALE GENOMIC DNA]</scope>
    <source>
        <strain evidence="9 10">CCAP 1055/1</strain>
    </source>
</reference>
<organism evidence="10">
    <name type="scientific">Phaeodactylum tricornutum (strain CCAP 1055/1)</name>
    <dbReference type="NCBI Taxonomy" id="556484"/>
    <lineage>
        <taxon>Eukaryota</taxon>
        <taxon>Sar</taxon>
        <taxon>Stramenopiles</taxon>
        <taxon>Ochrophyta</taxon>
        <taxon>Bacillariophyta</taxon>
        <taxon>Bacillariophyceae</taxon>
        <taxon>Bacillariophycidae</taxon>
        <taxon>Naviculales</taxon>
        <taxon>Phaeodactylaceae</taxon>
        <taxon>Phaeodactylum</taxon>
    </lineage>
</organism>